<feature type="chain" id="PRO_0000167908" description="Small ribosomal subunit protein bS20">
    <location>
        <begin position="1"/>
        <end position="94"/>
    </location>
</feature>
<keyword id="KW-1185">Reference proteome</keyword>
<keyword id="KW-0687">Ribonucleoprotein</keyword>
<keyword id="KW-0689">Ribosomal protein</keyword>
<keyword id="KW-0694">RNA-binding</keyword>
<keyword id="KW-0699">rRNA-binding</keyword>
<reference key="1">
    <citation type="journal article" date="1998" name="Nature">
        <title>The complete genome of the hyperthermophilic bacterium Aquifex aeolicus.</title>
        <authorList>
            <person name="Deckert G."/>
            <person name="Warren P.V."/>
            <person name="Gaasterland T."/>
            <person name="Young W.G."/>
            <person name="Lenox A.L."/>
            <person name="Graham D.E."/>
            <person name="Overbeek R."/>
            <person name="Snead M.A."/>
            <person name="Keller M."/>
            <person name="Aujay M."/>
            <person name="Huber R."/>
            <person name="Feldman R.A."/>
            <person name="Short J.M."/>
            <person name="Olsen G.J."/>
            <person name="Swanson R.V."/>
        </authorList>
    </citation>
    <scope>NUCLEOTIDE SEQUENCE [LARGE SCALE GENOMIC DNA]</scope>
    <source>
        <strain>VF5</strain>
    </source>
</reference>
<accession>O67643</accession>
<gene>
    <name evidence="1" type="primary">rpsT</name>
    <name type="ordered locus">aq_1767</name>
</gene>
<sequence>MPNTRQAKKRMRRDAKRRLRNRYHLSRMRTYIKNFRRMIENGEIDKAKEYINEVISVIYHTAAKGVIHKNEAARRASRVYKLLNKALQQQQAQA</sequence>
<dbReference type="EMBL" id="AE000657">
    <property type="protein sequence ID" value="AAC07609.1"/>
    <property type="status" value="ALT_INIT"/>
    <property type="molecule type" value="Genomic_DNA"/>
</dbReference>
<dbReference type="PIR" id="A70452">
    <property type="entry name" value="A70452"/>
</dbReference>
<dbReference type="RefSeq" id="NP_214209.1">
    <property type="nucleotide sequence ID" value="NC_000918.1"/>
</dbReference>
<dbReference type="RefSeq" id="WP_164930762.1">
    <property type="nucleotide sequence ID" value="NC_000918.1"/>
</dbReference>
<dbReference type="SMR" id="O67643"/>
<dbReference type="FunCoup" id="O67643">
    <property type="interactions" value="427"/>
</dbReference>
<dbReference type="STRING" id="224324.aq_1767"/>
<dbReference type="EnsemblBacteria" id="AAC07609">
    <property type="protein sequence ID" value="AAC07609"/>
    <property type="gene ID" value="aq_1767"/>
</dbReference>
<dbReference type="KEGG" id="aae:aq_1767"/>
<dbReference type="eggNOG" id="COG0268">
    <property type="taxonomic scope" value="Bacteria"/>
</dbReference>
<dbReference type="HOGENOM" id="CLU_160655_3_1_0"/>
<dbReference type="InParanoid" id="O67643"/>
<dbReference type="OrthoDB" id="9808392at2"/>
<dbReference type="Proteomes" id="UP000000798">
    <property type="component" value="Chromosome"/>
</dbReference>
<dbReference type="GO" id="GO:0005829">
    <property type="term" value="C:cytosol"/>
    <property type="evidence" value="ECO:0000318"/>
    <property type="project" value="GO_Central"/>
</dbReference>
<dbReference type="GO" id="GO:0015935">
    <property type="term" value="C:small ribosomal subunit"/>
    <property type="evidence" value="ECO:0000318"/>
    <property type="project" value="GO_Central"/>
</dbReference>
<dbReference type="GO" id="GO:0070181">
    <property type="term" value="F:small ribosomal subunit rRNA binding"/>
    <property type="evidence" value="ECO:0000318"/>
    <property type="project" value="GO_Central"/>
</dbReference>
<dbReference type="GO" id="GO:0003735">
    <property type="term" value="F:structural constituent of ribosome"/>
    <property type="evidence" value="ECO:0007669"/>
    <property type="project" value="InterPro"/>
</dbReference>
<dbReference type="GO" id="GO:0006412">
    <property type="term" value="P:translation"/>
    <property type="evidence" value="ECO:0007669"/>
    <property type="project" value="UniProtKB-UniRule"/>
</dbReference>
<dbReference type="FunFam" id="1.20.58.110:FF:000001">
    <property type="entry name" value="30S ribosomal protein S20"/>
    <property type="match status" value="1"/>
</dbReference>
<dbReference type="Gene3D" id="1.20.58.110">
    <property type="entry name" value="Ribosomal protein S20"/>
    <property type="match status" value="1"/>
</dbReference>
<dbReference type="HAMAP" id="MF_00500">
    <property type="entry name" value="Ribosomal_bS20"/>
    <property type="match status" value="1"/>
</dbReference>
<dbReference type="InterPro" id="IPR002583">
    <property type="entry name" value="Ribosomal_bS20"/>
</dbReference>
<dbReference type="InterPro" id="IPR036510">
    <property type="entry name" value="Ribosomal_bS20_sf"/>
</dbReference>
<dbReference type="NCBIfam" id="TIGR00029">
    <property type="entry name" value="S20"/>
    <property type="match status" value="1"/>
</dbReference>
<dbReference type="PANTHER" id="PTHR33398">
    <property type="entry name" value="30S RIBOSOMAL PROTEIN S20"/>
    <property type="match status" value="1"/>
</dbReference>
<dbReference type="PANTHER" id="PTHR33398:SF1">
    <property type="entry name" value="SMALL RIBOSOMAL SUBUNIT PROTEIN BS20C"/>
    <property type="match status" value="1"/>
</dbReference>
<dbReference type="Pfam" id="PF01649">
    <property type="entry name" value="Ribosomal_S20p"/>
    <property type="match status" value="1"/>
</dbReference>
<dbReference type="SUPFAM" id="SSF46992">
    <property type="entry name" value="Ribosomal protein S20"/>
    <property type="match status" value="1"/>
</dbReference>
<evidence type="ECO:0000255" key="1">
    <source>
        <dbReference type="HAMAP-Rule" id="MF_00500"/>
    </source>
</evidence>
<evidence type="ECO:0000305" key="2"/>
<name>RS20_AQUAE</name>
<proteinExistence type="inferred from homology"/>
<protein>
    <recommendedName>
        <fullName evidence="1">Small ribosomal subunit protein bS20</fullName>
    </recommendedName>
    <alternativeName>
        <fullName evidence="2">30S ribosomal protein S20</fullName>
    </alternativeName>
</protein>
<organism>
    <name type="scientific">Aquifex aeolicus (strain VF5)</name>
    <dbReference type="NCBI Taxonomy" id="224324"/>
    <lineage>
        <taxon>Bacteria</taxon>
        <taxon>Pseudomonadati</taxon>
        <taxon>Aquificota</taxon>
        <taxon>Aquificia</taxon>
        <taxon>Aquificales</taxon>
        <taxon>Aquificaceae</taxon>
        <taxon>Aquifex</taxon>
    </lineage>
</organism>
<comment type="function">
    <text evidence="1">Binds directly to 16S ribosomal RNA.</text>
</comment>
<comment type="similarity">
    <text evidence="1">Belongs to the bacterial ribosomal protein bS20 family.</text>
</comment>
<comment type="sequence caution" evidence="2">
    <conflict type="erroneous initiation">
        <sequence resource="EMBL-CDS" id="AAC07609"/>
    </conflict>
</comment>